<comment type="function">
    <text evidence="1">Located at the top of the head of the 30S subunit, it contacts several helices of the 16S rRNA. In the 70S ribosome it contacts the 23S rRNA (bridge B1a) and protein L5 of the 50S subunit (bridge B1b), connecting the 2 subunits; these bridges are implicated in subunit movement. Contacts the tRNAs in the A and P-sites.</text>
</comment>
<comment type="subunit">
    <text evidence="1">Part of the 30S ribosomal subunit. Forms a loose heterodimer with protein S19. Forms two bridges to the 50S subunit in the 70S ribosome.</text>
</comment>
<comment type="similarity">
    <text evidence="1">Belongs to the universal ribosomal protein uS13 family.</text>
</comment>
<dbReference type="EMBL" id="CP000282">
    <property type="protein sequence ID" value="ABD80243.1"/>
    <property type="molecule type" value="Genomic_DNA"/>
</dbReference>
<dbReference type="RefSeq" id="WP_011467463.1">
    <property type="nucleotide sequence ID" value="NC_007912.1"/>
</dbReference>
<dbReference type="SMR" id="Q21M36"/>
<dbReference type="STRING" id="203122.Sde_0981"/>
<dbReference type="GeneID" id="98612665"/>
<dbReference type="KEGG" id="sde:Sde_0981"/>
<dbReference type="eggNOG" id="COG0099">
    <property type="taxonomic scope" value="Bacteria"/>
</dbReference>
<dbReference type="HOGENOM" id="CLU_103849_1_2_6"/>
<dbReference type="OrthoDB" id="9803610at2"/>
<dbReference type="Proteomes" id="UP000001947">
    <property type="component" value="Chromosome"/>
</dbReference>
<dbReference type="GO" id="GO:0005829">
    <property type="term" value="C:cytosol"/>
    <property type="evidence" value="ECO:0007669"/>
    <property type="project" value="TreeGrafter"/>
</dbReference>
<dbReference type="GO" id="GO:0015935">
    <property type="term" value="C:small ribosomal subunit"/>
    <property type="evidence" value="ECO:0007669"/>
    <property type="project" value="TreeGrafter"/>
</dbReference>
<dbReference type="GO" id="GO:0019843">
    <property type="term" value="F:rRNA binding"/>
    <property type="evidence" value="ECO:0007669"/>
    <property type="project" value="UniProtKB-UniRule"/>
</dbReference>
<dbReference type="GO" id="GO:0003735">
    <property type="term" value="F:structural constituent of ribosome"/>
    <property type="evidence" value="ECO:0007669"/>
    <property type="project" value="InterPro"/>
</dbReference>
<dbReference type="GO" id="GO:0000049">
    <property type="term" value="F:tRNA binding"/>
    <property type="evidence" value="ECO:0007669"/>
    <property type="project" value="UniProtKB-UniRule"/>
</dbReference>
<dbReference type="GO" id="GO:0006412">
    <property type="term" value="P:translation"/>
    <property type="evidence" value="ECO:0007669"/>
    <property type="project" value="UniProtKB-UniRule"/>
</dbReference>
<dbReference type="FunFam" id="1.10.8.50:FF:000001">
    <property type="entry name" value="30S ribosomal protein S13"/>
    <property type="match status" value="1"/>
</dbReference>
<dbReference type="FunFam" id="4.10.910.10:FF:000001">
    <property type="entry name" value="30S ribosomal protein S13"/>
    <property type="match status" value="1"/>
</dbReference>
<dbReference type="Gene3D" id="1.10.8.50">
    <property type="match status" value="1"/>
</dbReference>
<dbReference type="Gene3D" id="4.10.910.10">
    <property type="entry name" value="30s ribosomal protein s13, domain 2"/>
    <property type="match status" value="1"/>
</dbReference>
<dbReference type="HAMAP" id="MF_01315">
    <property type="entry name" value="Ribosomal_uS13"/>
    <property type="match status" value="1"/>
</dbReference>
<dbReference type="InterPro" id="IPR027437">
    <property type="entry name" value="Rbsml_uS13_C"/>
</dbReference>
<dbReference type="InterPro" id="IPR001892">
    <property type="entry name" value="Ribosomal_uS13"/>
</dbReference>
<dbReference type="InterPro" id="IPR010979">
    <property type="entry name" value="Ribosomal_uS13-like_H2TH"/>
</dbReference>
<dbReference type="InterPro" id="IPR019980">
    <property type="entry name" value="Ribosomal_uS13_bac-type"/>
</dbReference>
<dbReference type="InterPro" id="IPR018269">
    <property type="entry name" value="Ribosomal_uS13_CS"/>
</dbReference>
<dbReference type="NCBIfam" id="TIGR03631">
    <property type="entry name" value="uS13_bact"/>
    <property type="match status" value="1"/>
</dbReference>
<dbReference type="PANTHER" id="PTHR10871">
    <property type="entry name" value="30S RIBOSOMAL PROTEIN S13/40S RIBOSOMAL PROTEIN S18"/>
    <property type="match status" value="1"/>
</dbReference>
<dbReference type="PANTHER" id="PTHR10871:SF1">
    <property type="entry name" value="SMALL RIBOSOMAL SUBUNIT PROTEIN US13M"/>
    <property type="match status" value="1"/>
</dbReference>
<dbReference type="Pfam" id="PF00416">
    <property type="entry name" value="Ribosomal_S13"/>
    <property type="match status" value="1"/>
</dbReference>
<dbReference type="PIRSF" id="PIRSF002134">
    <property type="entry name" value="Ribosomal_S13"/>
    <property type="match status" value="1"/>
</dbReference>
<dbReference type="SUPFAM" id="SSF46946">
    <property type="entry name" value="S13-like H2TH domain"/>
    <property type="match status" value="1"/>
</dbReference>
<dbReference type="PROSITE" id="PS00646">
    <property type="entry name" value="RIBOSOMAL_S13_1"/>
    <property type="match status" value="1"/>
</dbReference>
<dbReference type="PROSITE" id="PS50159">
    <property type="entry name" value="RIBOSOMAL_S13_2"/>
    <property type="match status" value="1"/>
</dbReference>
<name>RS13_SACD2</name>
<protein>
    <recommendedName>
        <fullName evidence="1">Small ribosomal subunit protein uS13</fullName>
    </recommendedName>
    <alternativeName>
        <fullName evidence="3">30S ribosomal protein S13</fullName>
    </alternativeName>
</protein>
<reference key="1">
    <citation type="journal article" date="2008" name="PLoS Genet.">
        <title>Complete genome sequence of the complex carbohydrate-degrading marine bacterium, Saccharophagus degradans strain 2-40 T.</title>
        <authorList>
            <person name="Weiner R.M."/>
            <person name="Taylor L.E. II"/>
            <person name="Henrissat B."/>
            <person name="Hauser L."/>
            <person name="Land M."/>
            <person name="Coutinho P.M."/>
            <person name="Rancurel C."/>
            <person name="Saunders E.H."/>
            <person name="Longmire A.G."/>
            <person name="Zhang H."/>
            <person name="Bayer E.A."/>
            <person name="Gilbert H.J."/>
            <person name="Larimer F."/>
            <person name="Zhulin I.B."/>
            <person name="Ekborg N.A."/>
            <person name="Lamed R."/>
            <person name="Richardson P.M."/>
            <person name="Borovok I."/>
            <person name="Hutcheson S."/>
        </authorList>
    </citation>
    <scope>NUCLEOTIDE SEQUENCE [LARGE SCALE GENOMIC DNA]</scope>
    <source>
        <strain>2-40 / ATCC 43961 / DSM 17024</strain>
    </source>
</reference>
<sequence>MARIAGVNIPDHKHAVISLTYVYGIGRTKAKQICSAAGVAESTKIGDLSEEQVDTIRNEVAKFTVEGDLRREVSMNIKRLMDLGCYRGLRHRRNLPVRGQRSKTNARTRKGPRKPIKR</sequence>
<keyword id="KW-1185">Reference proteome</keyword>
<keyword id="KW-0687">Ribonucleoprotein</keyword>
<keyword id="KW-0689">Ribosomal protein</keyword>
<keyword id="KW-0694">RNA-binding</keyword>
<keyword id="KW-0699">rRNA-binding</keyword>
<keyword id="KW-0820">tRNA-binding</keyword>
<accession>Q21M36</accession>
<proteinExistence type="inferred from homology"/>
<evidence type="ECO:0000255" key="1">
    <source>
        <dbReference type="HAMAP-Rule" id="MF_01315"/>
    </source>
</evidence>
<evidence type="ECO:0000256" key="2">
    <source>
        <dbReference type="SAM" id="MobiDB-lite"/>
    </source>
</evidence>
<evidence type="ECO:0000305" key="3"/>
<organism>
    <name type="scientific">Saccharophagus degradans (strain 2-40 / ATCC 43961 / DSM 17024)</name>
    <dbReference type="NCBI Taxonomy" id="203122"/>
    <lineage>
        <taxon>Bacteria</taxon>
        <taxon>Pseudomonadati</taxon>
        <taxon>Pseudomonadota</taxon>
        <taxon>Gammaproteobacteria</taxon>
        <taxon>Cellvibrionales</taxon>
        <taxon>Cellvibrionaceae</taxon>
        <taxon>Saccharophagus</taxon>
    </lineage>
</organism>
<feature type="chain" id="PRO_0000306699" description="Small ribosomal subunit protein uS13">
    <location>
        <begin position="1"/>
        <end position="118"/>
    </location>
</feature>
<feature type="region of interest" description="Disordered" evidence="2">
    <location>
        <begin position="93"/>
        <end position="118"/>
    </location>
</feature>
<gene>
    <name evidence="1" type="primary">rpsM</name>
    <name type="ordered locus">Sde_0981</name>
</gene>